<dbReference type="EMBL" id="AE013599">
    <property type="protein sequence ID" value="AAF58096.2"/>
    <property type="molecule type" value="Genomic_DNA"/>
</dbReference>
<dbReference type="EMBL" id="AE013599">
    <property type="protein sequence ID" value="AAM70967.2"/>
    <property type="molecule type" value="Genomic_DNA"/>
</dbReference>
<dbReference type="EMBL" id="AE013599">
    <property type="protein sequence ID" value="AAO41388.1"/>
    <property type="molecule type" value="Genomic_DNA"/>
</dbReference>
<dbReference type="EMBL" id="AE013599">
    <property type="protein sequence ID" value="AHN56266.1"/>
    <property type="molecule type" value="Genomic_DNA"/>
</dbReference>
<dbReference type="EMBL" id="BT150416">
    <property type="protein sequence ID" value="AHB32098.1"/>
    <property type="molecule type" value="mRNA"/>
</dbReference>
<dbReference type="RefSeq" id="NP_001286469.1">
    <property type="nucleotide sequence ID" value="NM_001299540.1"/>
</dbReference>
<dbReference type="RefSeq" id="NP_611064.2">
    <property type="nucleotide sequence ID" value="NM_137220.3"/>
</dbReference>
<dbReference type="RefSeq" id="NP_725499.2">
    <property type="nucleotide sequence ID" value="NM_166121.2"/>
</dbReference>
<dbReference type="RefSeq" id="NP_788361.1">
    <property type="nucleotide sequence ID" value="NM_176181.2"/>
</dbReference>
<dbReference type="SMR" id="Q0E961"/>
<dbReference type="FunCoup" id="Q0E961">
    <property type="interactions" value="88"/>
</dbReference>
<dbReference type="IntAct" id="Q0E961">
    <property type="interactions" value="4"/>
</dbReference>
<dbReference type="STRING" id="7227.FBpp0086434"/>
<dbReference type="GlyCosmos" id="Q0E961">
    <property type="glycosylation" value="5 sites, No reported glycans"/>
</dbReference>
<dbReference type="GlyGen" id="Q0E961">
    <property type="glycosylation" value="7 sites"/>
</dbReference>
<dbReference type="PaxDb" id="7227-FBpp0086433"/>
<dbReference type="EnsemblMetazoa" id="FBtr0087298">
    <property type="protein sequence ID" value="FBpp0086433"/>
    <property type="gene ID" value="FBgn0034049"/>
</dbReference>
<dbReference type="EnsemblMetazoa" id="FBtr0087299">
    <property type="protein sequence ID" value="FBpp0086434"/>
    <property type="gene ID" value="FBgn0034049"/>
</dbReference>
<dbReference type="EnsemblMetazoa" id="FBtr0087300">
    <property type="protein sequence ID" value="FBpp0086435"/>
    <property type="gene ID" value="FBgn0034049"/>
</dbReference>
<dbReference type="EnsemblMetazoa" id="FBtr0340017">
    <property type="protein sequence ID" value="FBpp0309031"/>
    <property type="gene ID" value="FBgn0034049"/>
</dbReference>
<dbReference type="GeneID" id="36747"/>
<dbReference type="KEGG" id="dme:Dmel_CG8291"/>
<dbReference type="UCSC" id="CG8291-RA">
    <property type="organism name" value="d. melanogaster"/>
</dbReference>
<dbReference type="AGR" id="FB:FBgn0034049"/>
<dbReference type="CTD" id="36747"/>
<dbReference type="FlyBase" id="FBgn0034049">
    <property type="gene designation" value="bdg"/>
</dbReference>
<dbReference type="VEuPathDB" id="VectorBase:FBgn0034049"/>
<dbReference type="eggNOG" id="KOG3660">
    <property type="taxonomic scope" value="Eukaryota"/>
</dbReference>
<dbReference type="HOGENOM" id="CLU_256149_0_0_1"/>
<dbReference type="InParanoid" id="Q0E961"/>
<dbReference type="OMA" id="EPAMDVW"/>
<dbReference type="OrthoDB" id="6366319at2759"/>
<dbReference type="PhylomeDB" id="Q0E961"/>
<dbReference type="SignaLink" id="Q0E961"/>
<dbReference type="BioGRID-ORCS" id="36747">
    <property type="hits" value="0 hits in 1 CRISPR screen"/>
</dbReference>
<dbReference type="GenomeRNAi" id="36747"/>
<dbReference type="PRO" id="PR:Q0E961"/>
<dbReference type="Proteomes" id="UP000000803">
    <property type="component" value="Chromosome 2R"/>
</dbReference>
<dbReference type="Bgee" id="FBgn0034049">
    <property type="expression patterns" value="Expressed in subperineurial glial cell (Drosophila) in insect head and 150 other cell types or tissues"/>
</dbReference>
<dbReference type="ExpressionAtlas" id="Q0E961">
    <property type="expression patterns" value="baseline and differential"/>
</dbReference>
<dbReference type="GO" id="GO:0016020">
    <property type="term" value="C:membrane"/>
    <property type="evidence" value="ECO:0000255"/>
    <property type="project" value="FlyBase"/>
</dbReference>
<dbReference type="GO" id="GO:0005886">
    <property type="term" value="C:plasma membrane"/>
    <property type="evidence" value="ECO:0000318"/>
    <property type="project" value="GO_Central"/>
</dbReference>
<dbReference type="GO" id="GO:0005283">
    <property type="term" value="F:amino acid:sodium symporter activity"/>
    <property type="evidence" value="ECO:0000318"/>
    <property type="project" value="GO_Central"/>
</dbReference>
<dbReference type="GO" id="GO:0015179">
    <property type="term" value="F:L-amino acid transmembrane transporter activity"/>
    <property type="evidence" value="ECO:0000318"/>
    <property type="project" value="GO_Central"/>
</dbReference>
<dbReference type="GO" id="GO:0005326">
    <property type="term" value="F:neurotransmitter transmembrane transporter activity"/>
    <property type="evidence" value="ECO:0000250"/>
    <property type="project" value="FlyBase"/>
</dbReference>
<dbReference type="GO" id="GO:0005328">
    <property type="term" value="F:neurotransmitter:sodium symporter activity"/>
    <property type="evidence" value="ECO:0000255"/>
    <property type="project" value="FlyBase"/>
</dbReference>
<dbReference type="GO" id="GO:1903804">
    <property type="term" value="P:glycine import across plasma membrane"/>
    <property type="evidence" value="ECO:0000318"/>
    <property type="project" value="GO_Central"/>
</dbReference>
<dbReference type="GO" id="GO:0006836">
    <property type="term" value="P:neurotransmitter transport"/>
    <property type="evidence" value="ECO:0000250"/>
    <property type="project" value="FlyBase"/>
</dbReference>
<dbReference type="GO" id="GO:0007464">
    <property type="term" value="P:R3/R4 cell fate commitment"/>
    <property type="evidence" value="ECO:0000315"/>
    <property type="project" value="FlyBase"/>
</dbReference>
<dbReference type="GO" id="GO:0035725">
    <property type="term" value="P:sodium ion transmembrane transport"/>
    <property type="evidence" value="ECO:0000318"/>
    <property type="project" value="GO_Central"/>
</dbReference>
<dbReference type="CDD" id="cd06857">
    <property type="entry name" value="SLC5-6-like_sbd"/>
    <property type="match status" value="1"/>
</dbReference>
<dbReference type="InterPro" id="IPR000175">
    <property type="entry name" value="Na/ntran_symport"/>
</dbReference>
<dbReference type="InterPro" id="IPR037272">
    <property type="entry name" value="SNS_sf"/>
</dbReference>
<dbReference type="PANTHER" id="PTHR11616:SF323">
    <property type="entry name" value="SODIUM-DEPENDENT TRANSPORTER BEDRAGGLED"/>
    <property type="match status" value="1"/>
</dbReference>
<dbReference type="PANTHER" id="PTHR11616">
    <property type="entry name" value="SODIUM/CHLORIDE DEPENDENT TRANSPORTER"/>
    <property type="match status" value="1"/>
</dbReference>
<dbReference type="Pfam" id="PF00209">
    <property type="entry name" value="SNF"/>
    <property type="match status" value="1"/>
</dbReference>
<dbReference type="PRINTS" id="PR00176">
    <property type="entry name" value="NANEUSMPORT"/>
</dbReference>
<dbReference type="SUPFAM" id="SSF161070">
    <property type="entry name" value="SNF-like"/>
    <property type="match status" value="1"/>
</dbReference>
<dbReference type="PROSITE" id="PS50267">
    <property type="entry name" value="NA_NEUROTRAN_SYMP_3"/>
    <property type="match status" value="1"/>
</dbReference>
<gene>
    <name evidence="5 8" type="primary">bdg</name>
    <name evidence="8" type="ORF">CG8291</name>
</gene>
<proteinExistence type="evidence at transcript level"/>
<reference evidence="9" key="1">
    <citation type="journal article" date="2000" name="Science">
        <title>The genome sequence of Drosophila melanogaster.</title>
        <authorList>
            <person name="Adams M.D."/>
            <person name="Celniker S.E."/>
            <person name="Holt R.A."/>
            <person name="Evans C.A."/>
            <person name="Gocayne J.D."/>
            <person name="Amanatides P.G."/>
            <person name="Scherer S.E."/>
            <person name="Li P.W."/>
            <person name="Hoskins R.A."/>
            <person name="Galle R.F."/>
            <person name="George R.A."/>
            <person name="Lewis S.E."/>
            <person name="Richards S."/>
            <person name="Ashburner M."/>
            <person name="Henderson S.N."/>
            <person name="Sutton G.G."/>
            <person name="Wortman J.R."/>
            <person name="Yandell M.D."/>
            <person name="Zhang Q."/>
            <person name="Chen L.X."/>
            <person name="Brandon R.C."/>
            <person name="Rogers Y.-H.C."/>
            <person name="Blazej R.G."/>
            <person name="Champe M."/>
            <person name="Pfeiffer B.D."/>
            <person name="Wan K.H."/>
            <person name="Doyle C."/>
            <person name="Baxter E.G."/>
            <person name="Helt G."/>
            <person name="Nelson C.R."/>
            <person name="Miklos G.L.G."/>
            <person name="Abril J.F."/>
            <person name="Agbayani A."/>
            <person name="An H.-J."/>
            <person name="Andrews-Pfannkoch C."/>
            <person name="Baldwin D."/>
            <person name="Ballew R.M."/>
            <person name="Basu A."/>
            <person name="Baxendale J."/>
            <person name="Bayraktaroglu L."/>
            <person name="Beasley E.M."/>
            <person name="Beeson K.Y."/>
            <person name="Benos P.V."/>
            <person name="Berman B.P."/>
            <person name="Bhandari D."/>
            <person name="Bolshakov S."/>
            <person name="Borkova D."/>
            <person name="Botchan M.R."/>
            <person name="Bouck J."/>
            <person name="Brokstein P."/>
            <person name="Brottier P."/>
            <person name="Burtis K.C."/>
            <person name="Busam D.A."/>
            <person name="Butler H."/>
            <person name="Cadieu E."/>
            <person name="Center A."/>
            <person name="Chandra I."/>
            <person name="Cherry J.M."/>
            <person name="Cawley S."/>
            <person name="Dahlke C."/>
            <person name="Davenport L.B."/>
            <person name="Davies P."/>
            <person name="de Pablos B."/>
            <person name="Delcher A."/>
            <person name="Deng Z."/>
            <person name="Mays A.D."/>
            <person name="Dew I."/>
            <person name="Dietz S.M."/>
            <person name="Dodson K."/>
            <person name="Doup L.E."/>
            <person name="Downes M."/>
            <person name="Dugan-Rocha S."/>
            <person name="Dunkov B.C."/>
            <person name="Dunn P."/>
            <person name="Durbin K.J."/>
            <person name="Evangelista C.C."/>
            <person name="Ferraz C."/>
            <person name="Ferriera S."/>
            <person name="Fleischmann W."/>
            <person name="Fosler C."/>
            <person name="Gabrielian A.E."/>
            <person name="Garg N.S."/>
            <person name="Gelbart W.M."/>
            <person name="Glasser K."/>
            <person name="Glodek A."/>
            <person name="Gong F."/>
            <person name="Gorrell J.H."/>
            <person name="Gu Z."/>
            <person name="Guan P."/>
            <person name="Harris M."/>
            <person name="Harris N.L."/>
            <person name="Harvey D.A."/>
            <person name="Heiman T.J."/>
            <person name="Hernandez J.R."/>
            <person name="Houck J."/>
            <person name="Hostin D."/>
            <person name="Houston K.A."/>
            <person name="Howland T.J."/>
            <person name="Wei M.-H."/>
            <person name="Ibegwam C."/>
            <person name="Jalali M."/>
            <person name="Kalush F."/>
            <person name="Karpen G.H."/>
            <person name="Ke Z."/>
            <person name="Kennison J.A."/>
            <person name="Ketchum K.A."/>
            <person name="Kimmel B.E."/>
            <person name="Kodira C.D."/>
            <person name="Kraft C.L."/>
            <person name="Kravitz S."/>
            <person name="Kulp D."/>
            <person name="Lai Z."/>
            <person name="Lasko P."/>
            <person name="Lei Y."/>
            <person name="Levitsky A.A."/>
            <person name="Li J.H."/>
            <person name="Li Z."/>
            <person name="Liang Y."/>
            <person name="Lin X."/>
            <person name="Liu X."/>
            <person name="Mattei B."/>
            <person name="McIntosh T.C."/>
            <person name="McLeod M.P."/>
            <person name="McPherson D."/>
            <person name="Merkulov G."/>
            <person name="Milshina N.V."/>
            <person name="Mobarry C."/>
            <person name="Morris J."/>
            <person name="Moshrefi A."/>
            <person name="Mount S.M."/>
            <person name="Moy M."/>
            <person name="Murphy B."/>
            <person name="Murphy L."/>
            <person name="Muzny D.M."/>
            <person name="Nelson D.L."/>
            <person name="Nelson D.R."/>
            <person name="Nelson K.A."/>
            <person name="Nixon K."/>
            <person name="Nusskern D.R."/>
            <person name="Pacleb J.M."/>
            <person name="Palazzolo M."/>
            <person name="Pittman G.S."/>
            <person name="Pan S."/>
            <person name="Pollard J."/>
            <person name="Puri V."/>
            <person name="Reese M.G."/>
            <person name="Reinert K."/>
            <person name="Remington K."/>
            <person name="Saunders R.D.C."/>
            <person name="Scheeler F."/>
            <person name="Shen H."/>
            <person name="Shue B.C."/>
            <person name="Siden-Kiamos I."/>
            <person name="Simpson M."/>
            <person name="Skupski M.P."/>
            <person name="Smith T.J."/>
            <person name="Spier E."/>
            <person name="Spradling A.C."/>
            <person name="Stapleton M."/>
            <person name="Strong R."/>
            <person name="Sun E."/>
            <person name="Svirskas R."/>
            <person name="Tector C."/>
            <person name="Turner R."/>
            <person name="Venter E."/>
            <person name="Wang A.H."/>
            <person name="Wang X."/>
            <person name="Wang Z.-Y."/>
            <person name="Wassarman D.A."/>
            <person name="Weinstock G.M."/>
            <person name="Weissenbach J."/>
            <person name="Williams S.M."/>
            <person name="Woodage T."/>
            <person name="Worley K.C."/>
            <person name="Wu D."/>
            <person name="Yang S."/>
            <person name="Yao Q.A."/>
            <person name="Ye J."/>
            <person name="Yeh R.-F."/>
            <person name="Zaveri J.S."/>
            <person name="Zhan M."/>
            <person name="Zhang G."/>
            <person name="Zhao Q."/>
            <person name="Zheng L."/>
            <person name="Zheng X.H."/>
            <person name="Zhong F.N."/>
            <person name="Zhong W."/>
            <person name="Zhou X."/>
            <person name="Zhu S.C."/>
            <person name="Zhu X."/>
            <person name="Smith H.O."/>
            <person name="Gibbs R.A."/>
            <person name="Myers E.W."/>
            <person name="Rubin G.M."/>
            <person name="Venter J.C."/>
        </authorList>
    </citation>
    <scope>NUCLEOTIDE SEQUENCE [LARGE SCALE GENOMIC DNA]</scope>
    <source>
        <strain evidence="9">Berkeley</strain>
    </source>
</reference>
<reference evidence="9" key="2">
    <citation type="journal article" date="2002" name="Genome Biol.">
        <title>Annotation of the Drosophila melanogaster euchromatic genome: a systematic review.</title>
        <authorList>
            <person name="Misra S."/>
            <person name="Crosby M.A."/>
            <person name="Mungall C.J."/>
            <person name="Matthews B.B."/>
            <person name="Campbell K.S."/>
            <person name="Hradecky P."/>
            <person name="Huang Y."/>
            <person name="Kaminker J.S."/>
            <person name="Millburn G.H."/>
            <person name="Prochnik S.E."/>
            <person name="Smith C.D."/>
            <person name="Tupy J.L."/>
            <person name="Whitfield E.J."/>
            <person name="Bayraktaroglu L."/>
            <person name="Berman B.P."/>
            <person name="Bettencourt B.R."/>
            <person name="Celniker S.E."/>
            <person name="de Grey A.D.N.J."/>
            <person name="Drysdale R.A."/>
            <person name="Harris N.L."/>
            <person name="Richter J."/>
            <person name="Russo S."/>
            <person name="Schroeder A.J."/>
            <person name="Shu S.Q."/>
            <person name="Stapleton M."/>
            <person name="Yamada C."/>
            <person name="Ashburner M."/>
            <person name="Gelbart W.M."/>
            <person name="Rubin G.M."/>
            <person name="Lewis S.E."/>
        </authorList>
    </citation>
    <scope>GENOME REANNOTATION</scope>
    <source>
        <strain evidence="9">Berkeley</strain>
    </source>
</reference>
<reference evidence="7" key="3">
    <citation type="submission" date="2013-11" db="EMBL/GenBank/DDBJ databases">
        <authorList>
            <person name="Carlson J."/>
            <person name="Booth B."/>
            <person name="Frise E."/>
            <person name="Park S."/>
            <person name="Wan K."/>
            <person name="Yu C."/>
            <person name="Celniker S."/>
        </authorList>
    </citation>
    <scope>NUCLEOTIDE SEQUENCE [LARGE SCALE MRNA]</scope>
    <source>
        <strain evidence="7">Berkeley</strain>
    </source>
</reference>
<reference evidence="6" key="4">
    <citation type="journal article" date="2007" name="Genetics">
        <title>Bedraggled, a putative transporter, influences the tissue polarity complex during the R3/R4 fate decision in the Drosophila eye.</title>
        <authorList>
            <person name="Rawls A.S."/>
            <person name="Schultz S.A."/>
            <person name="Mitra R.D."/>
            <person name="Wolff T."/>
        </authorList>
    </citation>
    <scope>FUNCTION</scope>
    <scope>DEVELOPMENTAL STAGE</scope>
    <scope>DISRUPTION PHENOTYPE</scope>
</reference>
<feature type="chain" id="PRO_0000452842" description="Sodium-dependent transporter bedraggled">
    <location>
        <begin position="1"/>
        <end position="1331"/>
    </location>
</feature>
<feature type="transmembrane region" description="Helical; Name=1" evidence="1">
    <location>
        <begin position="505"/>
        <end position="525"/>
    </location>
</feature>
<feature type="transmembrane region" description="Helical; Name=2" evidence="1">
    <location>
        <begin position="531"/>
        <end position="551"/>
    </location>
</feature>
<feature type="transmembrane region" description="Helical; Name=3" evidence="1">
    <location>
        <begin position="567"/>
        <end position="587"/>
    </location>
</feature>
<feature type="transmembrane region" description="Helical; Name=4" evidence="1">
    <location>
        <begin position="667"/>
        <end position="687"/>
    </location>
</feature>
<feature type="transmembrane region" description="Helical; Name=5" evidence="1">
    <location>
        <begin position="696"/>
        <end position="716"/>
    </location>
</feature>
<feature type="transmembrane region" description="Helical; Name=6" evidence="1">
    <location>
        <begin position="741"/>
        <end position="761"/>
    </location>
</feature>
<feature type="transmembrane region" description="Helical; Name=7" evidence="1">
    <location>
        <begin position="778"/>
        <end position="798"/>
    </location>
</feature>
<feature type="transmembrane region" description="Helical; Name=8" evidence="1">
    <location>
        <begin position="890"/>
        <end position="910"/>
    </location>
</feature>
<feature type="transmembrane region" description="Helical; Name=9" evidence="1">
    <location>
        <begin position="926"/>
        <end position="946"/>
    </location>
</feature>
<feature type="transmembrane region" description="Helical; Name=10" evidence="1">
    <location>
        <begin position="956"/>
        <end position="976"/>
    </location>
</feature>
<feature type="transmembrane region" description="Helical; Name=11" evidence="1">
    <location>
        <begin position="998"/>
        <end position="1018"/>
    </location>
</feature>
<feature type="transmembrane region" description="Helical; Name=12" evidence="1">
    <location>
        <begin position="1044"/>
        <end position="1064"/>
    </location>
</feature>
<feature type="region of interest" description="Disordered" evidence="3">
    <location>
        <begin position="1"/>
        <end position="62"/>
    </location>
</feature>
<feature type="region of interest" description="Disordered" evidence="3">
    <location>
        <begin position="221"/>
        <end position="284"/>
    </location>
</feature>
<feature type="region of interest" description="Disordered" evidence="3">
    <location>
        <begin position="363"/>
        <end position="473"/>
    </location>
</feature>
<feature type="region of interest" description="Disordered" evidence="3">
    <location>
        <begin position="1086"/>
        <end position="1136"/>
    </location>
</feature>
<feature type="region of interest" description="Disordered" evidence="3">
    <location>
        <begin position="1169"/>
        <end position="1238"/>
    </location>
</feature>
<feature type="region of interest" description="Disordered" evidence="3">
    <location>
        <begin position="1256"/>
        <end position="1275"/>
    </location>
</feature>
<feature type="compositionally biased region" description="Polar residues" evidence="3">
    <location>
        <begin position="16"/>
        <end position="25"/>
    </location>
</feature>
<feature type="compositionally biased region" description="Gly residues" evidence="3">
    <location>
        <begin position="28"/>
        <end position="43"/>
    </location>
</feature>
<feature type="compositionally biased region" description="Polar residues" evidence="3">
    <location>
        <begin position="258"/>
        <end position="282"/>
    </location>
</feature>
<feature type="compositionally biased region" description="Basic and acidic residues" evidence="3">
    <location>
        <begin position="369"/>
        <end position="383"/>
    </location>
</feature>
<feature type="compositionally biased region" description="Polar residues" evidence="3">
    <location>
        <begin position="413"/>
        <end position="436"/>
    </location>
</feature>
<feature type="compositionally biased region" description="Low complexity" evidence="3">
    <location>
        <begin position="437"/>
        <end position="453"/>
    </location>
</feature>
<feature type="compositionally biased region" description="Polar residues" evidence="3">
    <location>
        <begin position="463"/>
        <end position="473"/>
    </location>
</feature>
<feature type="compositionally biased region" description="Polar residues" evidence="3">
    <location>
        <begin position="1097"/>
        <end position="1115"/>
    </location>
</feature>
<feature type="compositionally biased region" description="Polar residues" evidence="3">
    <location>
        <begin position="1186"/>
        <end position="1196"/>
    </location>
</feature>
<feature type="compositionally biased region" description="Low complexity" evidence="3">
    <location>
        <begin position="1197"/>
        <end position="1209"/>
    </location>
</feature>
<feature type="glycosylation site" description="N-linked (GlcNAc...) asparagine" evidence="2">
    <location>
        <position position="168"/>
    </location>
</feature>
<feature type="glycosylation site" description="N-linked (GlcNAc...) asparagine" evidence="2">
    <location>
        <position position="627"/>
    </location>
</feature>
<feature type="glycosylation site" description="N-linked (GlcNAc...) asparagine" evidence="2">
    <location>
        <position position="631"/>
    </location>
</feature>
<feature type="glycosylation site" description="N-linked (GlcNAc...) asparagine" evidence="2">
    <location>
        <position position="857"/>
    </location>
</feature>
<feature type="glycosylation site" description="N-linked (GlcNAc...) asparagine" evidence="2">
    <location>
        <position position="921"/>
    </location>
</feature>
<feature type="sequence conflict" description="In Ref. 1; AHN56266." evidence="6" ref="1">
    <location>
        <position position="667"/>
    </location>
</feature>
<organism evidence="9">
    <name type="scientific">Drosophila melanogaster</name>
    <name type="common">Fruit fly</name>
    <dbReference type="NCBI Taxonomy" id="7227"/>
    <lineage>
        <taxon>Eukaryota</taxon>
        <taxon>Metazoa</taxon>
        <taxon>Ecdysozoa</taxon>
        <taxon>Arthropoda</taxon>
        <taxon>Hexapoda</taxon>
        <taxon>Insecta</taxon>
        <taxon>Pterygota</taxon>
        <taxon>Neoptera</taxon>
        <taxon>Endopterygota</taxon>
        <taxon>Diptera</taxon>
        <taxon>Brachycera</taxon>
        <taxon>Muscomorpha</taxon>
        <taxon>Ephydroidea</taxon>
        <taxon>Drosophilidae</taxon>
        <taxon>Drosophila</taxon>
        <taxon>Sophophora</taxon>
    </lineage>
</organism>
<evidence type="ECO:0000255" key="1"/>
<evidence type="ECO:0000255" key="2">
    <source>
        <dbReference type="PROSITE-ProRule" id="PRU00498"/>
    </source>
</evidence>
<evidence type="ECO:0000256" key="3">
    <source>
        <dbReference type="SAM" id="MobiDB-lite"/>
    </source>
</evidence>
<evidence type="ECO:0000269" key="4">
    <source>
    </source>
</evidence>
<evidence type="ECO:0000303" key="5">
    <source>
    </source>
</evidence>
<evidence type="ECO:0000305" key="6"/>
<evidence type="ECO:0000312" key="7">
    <source>
        <dbReference type="EMBL" id="AHB32098.1"/>
    </source>
</evidence>
<evidence type="ECO:0000312" key="8">
    <source>
        <dbReference type="FlyBase" id="FBgn0034049"/>
    </source>
</evidence>
<evidence type="ECO:0000312" key="9">
    <source>
        <dbReference type="Proteomes" id="UP000000803"/>
    </source>
</evidence>
<comment type="function">
    <text evidence="4">Putative sodium-dependent transporter which is required for viability, early imaginal disk development and adult motor coordination (PubMed:17890365). Also has a role in the fate commitment of the R3/R4 photoreceptor cells (PubMed:17890365). May function in ommatidial polarity by regulating the activity of the core polarity genes, acting upstream of (or in parallel to) Vang, dsh, pk, stan, and dgo, but downstream or independently of fz (PubMed:17890365).</text>
</comment>
<comment type="subcellular location">
    <subcellularLocation>
        <location evidence="1">Membrane</location>
        <topology evidence="1">Multi-pass membrane protein</topology>
    </subcellularLocation>
</comment>
<comment type="developmental stage">
    <text evidence="4">Expressed in third instar eye disks.</text>
</comment>
<comment type="disruption phenotype">
    <text evidence="4">The imaginal disks of third instar larvae are dramatically decreased in size (PubMed:17890365). Overall larval size is unaffected (PubMed:17890365).</text>
</comment>
<comment type="miscellaneous">
    <text evidence="5">The name 'bedraggled' derives from escaper mutant adults which upon eclosion, immediately fall into their food and die due to severe defects in motor coordination.</text>
</comment>
<comment type="similarity">
    <text evidence="6">Belongs to the sodium:neurotransmitter symporter (SNF) (TC 2.A.22) family.</text>
</comment>
<sequence length="1331" mass="146659">MSSKEQQAAGRDFKRNSNAYSSLPPTGTGAGCSGAALGSGTGTGKRARSKQHQLEHEQFGLSNSLSSESIRQACAYYDDELSDEDLIEIQQTPQAFHQQTKQPLQLQPISFRLGDELGDERSAFCGSQEMQQVPLSTPIKQAAETDEALCVLSELDAILDVHDVSQLNGTCSSGSVNSGSDDDKVEDYLMDLDNYLEEMDNALNREDSLIIIDGHTSLKREPRTRTLPLSRKKKSSKKKSEDQEAAQGDFQREHQLRKTFSCSLRPTSQIASSSGSLETSTEPVMDVWRRQSMRRALEQEDTKATVAMEREEDDIPTLLVELPPRRDAEMRRCFSQGDCQASVAPTVGSQMLTEAHIFDNLLQTNARASSEEPRPRQYGRRLEGPPTPVRPLILAQSRPQSAPTRVQMREPQLQDTPTHPIMSTCSELSSARSSRMPSPVSLPSDSSSSGSSSAEHDQEPDPVQTTTMCSASSTTPLEPLHQLQLLLREKCGFNSQWPHAGSRTLALIGCTLGVFNMCRFAVLTINFGGNFLLQFLLLSVIFGIPLLWLQMCLGAKIRAGPVSMWKISPICAGVGIALVMQQCFLALYSTVSLAWILVYLRDVFPTAARSGYRWQEMAFPYRYDASNATGNLTQTVAEYFNVVVLQRLHLANHPDASGIRFHVNDRQLAFYLALIWAAVFLILCKGLKSLGKLAYIIYTLPLVALAVVTAKFVYVVDPSRIQNIFAASDFDDFLVNSNSWTAATQETFLTWGLLGASVIAITSRSHTNANKAALRRDAILLVLFTLIGLGLMALLALCCAQILWQHGYVYVPGSFENPDCYTSIYSLQSNTNPYLLSYPRSLIPHYSSFIGETYRRNRTMIHVESGFQALRFISEIFPAVLSLASDSISWVWAAVAFATFAGFGLAQLCVMWKPISSALGNSTSSVLLSCVTGLLLSIPFATEMGISILYYVDFLLGGSWFIPIIWTAQIFGVFLIRGRPYNGDDLVNDLRLCGSMSAFLALSWNVLLPIGLITLSVVDYKASLSNQFYYWRGKSYFTYWSRKMGSLIQIGVLLVIPVTAIIQIYRYLAHGPPDILERIQLLYRPPEEGEEPRRPSARQTASQSRRNALGQTTEGGQHDAQNDAPPKYTPPPSYTTATGARLAKLLRQSIRRSVRRVLGDSSRTRPVLSLDAESASPAAPPDYLTILTNPAGSSFNADPSPASSSSPESIEIDQRPVGYSQRSQSLGRKLHRSGASTLERRPYTAEDVVTILRSSVRHRQSQGGGNLVTASTLPRPPTAAMSTHLEDASFRSIENLVLNAEPPDRTPGVELELELEAGQAEECARNNTSVI</sequence>
<keyword id="KW-0175">Coiled coil</keyword>
<keyword id="KW-0325">Glycoprotein</keyword>
<keyword id="KW-0472">Membrane</keyword>
<keyword id="KW-1185">Reference proteome</keyword>
<keyword id="KW-0769">Symport</keyword>
<keyword id="KW-0812">Transmembrane</keyword>
<keyword id="KW-1133">Transmembrane helix</keyword>
<keyword id="KW-0813">Transport</keyword>
<accession>Q0E961</accession>
<accession>A0A0B4LF97</accession>
<name>BDGED_DROME</name>
<protein>
    <recommendedName>
        <fullName evidence="5">Sodium-dependent transporter bedraggled</fullName>
    </recommendedName>
</protein>